<sequence length="198" mass="22740">MSAIFKIIHETSSKFMDSILREGKLLTSNNLNKKFLTDSPKGQGSKDRKLCDSEESIKNKEHFWKHCDEADGVYFRILEMDTPLKTYAGDIILVFSKDMLYKYSWILNTTENFGFYISSPGFEGESQFSGEIGTTYTLDTLKDMDVSSFDPYSSELCVFNNVSLKFLKEIYVREPAFEDLQLSVRALNKYSNAPVIIF</sequence>
<reference key="1">
    <citation type="journal article" date="2001" name="Virology">
        <title>Analysis of the first complete DNA sequence of an invertebrate iridovirus: coding strategy of the genome of Chilo iridescent virus.</title>
        <authorList>
            <person name="Jakob N.J."/>
            <person name="Mueller K."/>
            <person name="Bahr U."/>
            <person name="Darai G."/>
        </authorList>
    </citation>
    <scope>NUCLEOTIDE SEQUENCE [LARGE SCALE GENOMIC DNA]</scope>
</reference>
<reference key="2">
    <citation type="journal article" date="2007" name="Virol. J.">
        <title>Comparative genomic analysis of the family Iridoviridae: re-annotating and defining the core set of iridovirus genes.</title>
        <authorList>
            <person name="Eaton H.E."/>
            <person name="Metcalf J."/>
            <person name="Penny E."/>
            <person name="Tcherepanov V."/>
            <person name="Upton C."/>
            <person name="Brunetti C.R."/>
        </authorList>
    </citation>
    <scope>GENOME REANNOTATION</scope>
</reference>
<organismHost>
    <name type="scientific">Acheta domesticus</name>
    <name type="common">House cricket</name>
    <dbReference type="NCBI Taxonomy" id="6997"/>
</organismHost>
<organismHost>
    <name type="scientific">Chilo suppressalis</name>
    <name type="common">Asiatic rice borer moth</name>
    <dbReference type="NCBI Taxonomy" id="168631"/>
</organismHost>
<organismHost>
    <name type="scientific">Gryllus bimaculatus</name>
    <name type="common">Two-spotted cricket</name>
    <dbReference type="NCBI Taxonomy" id="6999"/>
</organismHost>
<organismHost>
    <name type="scientific">Gryllus campestris</name>
    <dbReference type="NCBI Taxonomy" id="58607"/>
</organismHost>
<organismHost>
    <name type="scientific">Spodoptera frugiperda</name>
    <name type="common">Fall armyworm</name>
    <dbReference type="NCBI Taxonomy" id="7108"/>
</organismHost>
<organism>
    <name type="scientific">Invertebrate iridescent virus 6</name>
    <name type="common">IIV-6</name>
    <name type="synonym">Chilo iridescent virus</name>
    <dbReference type="NCBI Taxonomy" id="176652"/>
    <lineage>
        <taxon>Viruses</taxon>
        <taxon>Varidnaviria</taxon>
        <taxon>Bamfordvirae</taxon>
        <taxon>Nucleocytoviricota</taxon>
        <taxon>Megaviricetes</taxon>
        <taxon>Pimascovirales</taxon>
        <taxon>Iridoviridae</taxon>
        <taxon>Betairidovirinae</taxon>
        <taxon>Iridovirus</taxon>
    </lineage>
</organism>
<proteinExistence type="predicted"/>
<protein>
    <recommendedName>
        <fullName>Uncharacterized protein 422L</fullName>
    </recommendedName>
</protein>
<gene>
    <name type="ORF">IIV6-422L</name>
</gene>
<feature type="chain" id="PRO_0000377887" description="Uncharacterized protein 422L">
    <location>
        <begin position="1"/>
        <end position="198"/>
    </location>
</feature>
<name>422L_IIV6</name>
<keyword id="KW-1185">Reference proteome</keyword>
<accession>Q91FA3</accession>
<dbReference type="EMBL" id="AF303741">
    <property type="protein sequence ID" value="AAK82282.1"/>
    <property type="molecule type" value="Genomic_DNA"/>
</dbReference>
<dbReference type="RefSeq" id="NP_149885.1">
    <property type="nucleotide sequence ID" value="NC_003038.1"/>
</dbReference>
<dbReference type="KEGG" id="vg:1733160"/>
<dbReference type="OrthoDB" id="20233at10239"/>
<dbReference type="Proteomes" id="UP000001359">
    <property type="component" value="Genome"/>
</dbReference>
<dbReference type="InterPro" id="IPR043846">
    <property type="entry name" value="DUF5863"/>
</dbReference>
<dbReference type="Pfam" id="PF19181">
    <property type="entry name" value="DUF5863"/>
    <property type="match status" value="1"/>
</dbReference>